<comment type="similarity">
    <text evidence="1">Belongs to the UPF0102 family.</text>
</comment>
<dbReference type="EMBL" id="AM039952">
    <property type="protein sequence ID" value="CAJ22447.1"/>
    <property type="molecule type" value="Genomic_DNA"/>
</dbReference>
<dbReference type="RefSeq" id="WP_008571510.1">
    <property type="nucleotide sequence ID" value="NZ_CP017190.1"/>
</dbReference>
<dbReference type="SMR" id="Q3BXG6"/>
<dbReference type="STRING" id="456327.BJD11_18725"/>
<dbReference type="KEGG" id="xcv:XCV0816"/>
<dbReference type="eggNOG" id="COG0792">
    <property type="taxonomic scope" value="Bacteria"/>
</dbReference>
<dbReference type="HOGENOM" id="CLU_115353_1_0_6"/>
<dbReference type="Proteomes" id="UP000007069">
    <property type="component" value="Chromosome"/>
</dbReference>
<dbReference type="GO" id="GO:0003676">
    <property type="term" value="F:nucleic acid binding"/>
    <property type="evidence" value="ECO:0007669"/>
    <property type="project" value="InterPro"/>
</dbReference>
<dbReference type="Gene3D" id="3.40.1350.10">
    <property type="match status" value="1"/>
</dbReference>
<dbReference type="HAMAP" id="MF_00048">
    <property type="entry name" value="UPF0102"/>
    <property type="match status" value="1"/>
</dbReference>
<dbReference type="InterPro" id="IPR011335">
    <property type="entry name" value="Restrct_endonuc-II-like"/>
</dbReference>
<dbReference type="InterPro" id="IPR011856">
    <property type="entry name" value="tRNA_endonuc-like_dom_sf"/>
</dbReference>
<dbReference type="InterPro" id="IPR003509">
    <property type="entry name" value="UPF0102_YraN-like"/>
</dbReference>
<dbReference type="NCBIfam" id="NF009150">
    <property type="entry name" value="PRK12497.1-3"/>
    <property type="match status" value="1"/>
</dbReference>
<dbReference type="NCBIfam" id="TIGR00252">
    <property type="entry name" value="YraN family protein"/>
    <property type="match status" value="1"/>
</dbReference>
<dbReference type="PANTHER" id="PTHR34039">
    <property type="entry name" value="UPF0102 PROTEIN YRAN"/>
    <property type="match status" value="1"/>
</dbReference>
<dbReference type="PANTHER" id="PTHR34039:SF1">
    <property type="entry name" value="UPF0102 PROTEIN YRAN"/>
    <property type="match status" value="1"/>
</dbReference>
<dbReference type="Pfam" id="PF02021">
    <property type="entry name" value="UPF0102"/>
    <property type="match status" value="1"/>
</dbReference>
<dbReference type="SUPFAM" id="SSF52980">
    <property type="entry name" value="Restriction endonuclease-like"/>
    <property type="match status" value="1"/>
</dbReference>
<feature type="chain" id="PRO_1000009276" description="UPF0102 protein XCV0816">
    <location>
        <begin position="1"/>
        <end position="122"/>
    </location>
</feature>
<accession>Q3BXG6</accession>
<proteinExistence type="inferred from homology"/>
<evidence type="ECO:0000255" key="1">
    <source>
        <dbReference type="HAMAP-Rule" id="MF_00048"/>
    </source>
</evidence>
<protein>
    <recommendedName>
        <fullName evidence="1">UPF0102 protein XCV0816</fullName>
    </recommendedName>
</protein>
<sequence>MPAARQQRGAAVEAAARALLEQAGLRLVVGNANYRGGELDLVMRDGPALVFVEVRYRRDDRFGGGAASVDWRKRRKLVLAAQLFLGAHPTLAALPCRFDVVDASGEPPVLHWIRDAFRADDC</sequence>
<gene>
    <name type="ordered locus">XCV0816</name>
</gene>
<reference key="1">
    <citation type="journal article" date="2005" name="J. Bacteriol.">
        <title>Insights into genome plasticity and pathogenicity of the plant pathogenic Bacterium Xanthomonas campestris pv. vesicatoria revealed by the complete genome sequence.</title>
        <authorList>
            <person name="Thieme F."/>
            <person name="Koebnik R."/>
            <person name="Bekel T."/>
            <person name="Berger C."/>
            <person name="Boch J."/>
            <person name="Buettner D."/>
            <person name="Caldana C."/>
            <person name="Gaigalat L."/>
            <person name="Goesmann A."/>
            <person name="Kay S."/>
            <person name="Kirchner O."/>
            <person name="Lanz C."/>
            <person name="Linke B."/>
            <person name="McHardy A.C."/>
            <person name="Meyer F."/>
            <person name="Mittenhuber G."/>
            <person name="Nies D.H."/>
            <person name="Niesbach-Kloesgen U."/>
            <person name="Patschkowski T."/>
            <person name="Rueckert C."/>
            <person name="Rupp O."/>
            <person name="Schneiker S."/>
            <person name="Schuster S.C."/>
            <person name="Vorhoelter F.J."/>
            <person name="Weber E."/>
            <person name="Puehler A."/>
            <person name="Bonas U."/>
            <person name="Bartels D."/>
            <person name="Kaiser O."/>
        </authorList>
    </citation>
    <scope>NUCLEOTIDE SEQUENCE [LARGE SCALE GENOMIC DNA]</scope>
    <source>
        <strain>85-10</strain>
    </source>
</reference>
<name>Y816_XANE5</name>
<organism>
    <name type="scientific">Xanthomonas euvesicatoria pv. vesicatoria (strain 85-10)</name>
    <name type="common">Xanthomonas campestris pv. vesicatoria</name>
    <dbReference type="NCBI Taxonomy" id="316273"/>
    <lineage>
        <taxon>Bacteria</taxon>
        <taxon>Pseudomonadati</taxon>
        <taxon>Pseudomonadota</taxon>
        <taxon>Gammaproteobacteria</taxon>
        <taxon>Lysobacterales</taxon>
        <taxon>Lysobacteraceae</taxon>
        <taxon>Xanthomonas</taxon>
    </lineage>
</organism>